<evidence type="ECO:0000255" key="1">
    <source>
        <dbReference type="HAMAP-Rule" id="MF_01368"/>
    </source>
</evidence>
<evidence type="ECO:0000305" key="2"/>
<reference key="1">
    <citation type="journal article" date="2000" name="Nature">
        <title>DNA sequence of both chromosomes of the cholera pathogen Vibrio cholerae.</title>
        <authorList>
            <person name="Heidelberg J.F."/>
            <person name="Eisen J.A."/>
            <person name="Nelson W.C."/>
            <person name="Clayton R.A."/>
            <person name="Gwinn M.L."/>
            <person name="Dodson R.J."/>
            <person name="Haft D.H."/>
            <person name="Hickey E.K."/>
            <person name="Peterson J.D."/>
            <person name="Umayam L.A."/>
            <person name="Gill S.R."/>
            <person name="Nelson K.E."/>
            <person name="Read T.D."/>
            <person name="Tettelin H."/>
            <person name="Richardson D.L."/>
            <person name="Ermolaeva M.D."/>
            <person name="Vamathevan J.J."/>
            <person name="Bass S."/>
            <person name="Qin H."/>
            <person name="Dragoi I."/>
            <person name="Sellers P."/>
            <person name="McDonald L.A."/>
            <person name="Utterback T.R."/>
            <person name="Fleischmann R.D."/>
            <person name="Nierman W.C."/>
            <person name="White O."/>
            <person name="Salzberg S.L."/>
            <person name="Smith H.O."/>
            <person name="Colwell R.R."/>
            <person name="Mekalanos J.J."/>
            <person name="Venter J.C."/>
            <person name="Fraser C.M."/>
        </authorList>
    </citation>
    <scope>NUCLEOTIDE SEQUENCE [LARGE SCALE GENOMIC DNA]</scope>
    <source>
        <strain>ATCC 39315 / El Tor Inaba N16961</strain>
    </source>
</reference>
<feature type="chain" id="PRO_0000267964" description="Large ribosomal subunit protein bL17">
    <location>
        <begin position="1"/>
        <end position="128"/>
    </location>
</feature>
<comment type="subunit">
    <text evidence="1">Part of the 50S ribosomal subunit. Contacts protein L32.</text>
</comment>
<comment type="similarity">
    <text evidence="1">Belongs to the bacterial ribosomal protein bL17 family.</text>
</comment>
<name>RL17_VIBCH</name>
<organism>
    <name type="scientific">Vibrio cholerae serotype O1 (strain ATCC 39315 / El Tor Inaba N16961)</name>
    <dbReference type="NCBI Taxonomy" id="243277"/>
    <lineage>
        <taxon>Bacteria</taxon>
        <taxon>Pseudomonadati</taxon>
        <taxon>Pseudomonadota</taxon>
        <taxon>Gammaproteobacteria</taxon>
        <taxon>Vibrionales</taxon>
        <taxon>Vibrionaceae</taxon>
        <taxon>Vibrio</taxon>
    </lineage>
</organism>
<protein>
    <recommendedName>
        <fullName evidence="1">Large ribosomal subunit protein bL17</fullName>
    </recommendedName>
    <alternativeName>
        <fullName evidence="2">50S ribosomal protein L17</fullName>
    </alternativeName>
</protein>
<gene>
    <name evidence="1" type="primary">rplQ</name>
    <name type="ordered locus">VC_2570</name>
</gene>
<proteinExistence type="inferred from homology"/>
<accession>Q9KP09</accession>
<dbReference type="EMBL" id="AE003852">
    <property type="protein sequence ID" value="AAF95711.1"/>
    <property type="molecule type" value="Genomic_DNA"/>
</dbReference>
<dbReference type="PIR" id="H82060">
    <property type="entry name" value="H82060"/>
</dbReference>
<dbReference type="RefSeq" id="NP_232198.1">
    <property type="nucleotide sequence ID" value="NC_002505.1"/>
</dbReference>
<dbReference type="RefSeq" id="WP_001216360.1">
    <property type="nucleotide sequence ID" value="NZ_LT906614.1"/>
</dbReference>
<dbReference type="SMR" id="Q9KP09"/>
<dbReference type="STRING" id="243277.VC_2570"/>
<dbReference type="DNASU" id="2615587"/>
<dbReference type="EnsemblBacteria" id="AAF95711">
    <property type="protein sequence ID" value="AAF95711"/>
    <property type="gene ID" value="VC_2570"/>
</dbReference>
<dbReference type="GeneID" id="94012778"/>
<dbReference type="KEGG" id="vch:VC_2570"/>
<dbReference type="PATRIC" id="fig|243277.26.peg.2449"/>
<dbReference type="eggNOG" id="COG0203">
    <property type="taxonomic scope" value="Bacteria"/>
</dbReference>
<dbReference type="HOGENOM" id="CLU_074407_2_0_6"/>
<dbReference type="Proteomes" id="UP000000584">
    <property type="component" value="Chromosome 1"/>
</dbReference>
<dbReference type="GO" id="GO:0022625">
    <property type="term" value="C:cytosolic large ribosomal subunit"/>
    <property type="evidence" value="ECO:0000318"/>
    <property type="project" value="GO_Central"/>
</dbReference>
<dbReference type="GO" id="GO:0003735">
    <property type="term" value="F:structural constituent of ribosome"/>
    <property type="evidence" value="ECO:0000318"/>
    <property type="project" value="GO_Central"/>
</dbReference>
<dbReference type="GO" id="GO:0006412">
    <property type="term" value="P:translation"/>
    <property type="evidence" value="ECO:0007669"/>
    <property type="project" value="UniProtKB-UniRule"/>
</dbReference>
<dbReference type="FunFam" id="3.90.1030.10:FF:000001">
    <property type="entry name" value="50S ribosomal protein L17"/>
    <property type="match status" value="1"/>
</dbReference>
<dbReference type="Gene3D" id="3.90.1030.10">
    <property type="entry name" value="Ribosomal protein L17"/>
    <property type="match status" value="1"/>
</dbReference>
<dbReference type="HAMAP" id="MF_01368">
    <property type="entry name" value="Ribosomal_bL17"/>
    <property type="match status" value="1"/>
</dbReference>
<dbReference type="InterPro" id="IPR000456">
    <property type="entry name" value="Ribosomal_bL17"/>
</dbReference>
<dbReference type="InterPro" id="IPR047859">
    <property type="entry name" value="Ribosomal_bL17_CS"/>
</dbReference>
<dbReference type="InterPro" id="IPR036373">
    <property type="entry name" value="Ribosomal_bL17_sf"/>
</dbReference>
<dbReference type="NCBIfam" id="TIGR00059">
    <property type="entry name" value="L17"/>
    <property type="match status" value="1"/>
</dbReference>
<dbReference type="PANTHER" id="PTHR14413:SF16">
    <property type="entry name" value="LARGE RIBOSOMAL SUBUNIT PROTEIN BL17M"/>
    <property type="match status" value="1"/>
</dbReference>
<dbReference type="PANTHER" id="PTHR14413">
    <property type="entry name" value="RIBOSOMAL PROTEIN L17"/>
    <property type="match status" value="1"/>
</dbReference>
<dbReference type="Pfam" id="PF01196">
    <property type="entry name" value="Ribosomal_L17"/>
    <property type="match status" value="1"/>
</dbReference>
<dbReference type="SUPFAM" id="SSF64263">
    <property type="entry name" value="Prokaryotic ribosomal protein L17"/>
    <property type="match status" value="1"/>
</dbReference>
<dbReference type="PROSITE" id="PS01167">
    <property type="entry name" value="RIBOSOMAL_L17"/>
    <property type="match status" value="1"/>
</dbReference>
<sequence>MRHRKSGRQLNRNSSHRKAMFSNMASSLVRHEVIKTTLPKAKELRRVVEPLITLAKTDSVANRRLAFARTRDNEVVAKLFNELGPRFAARQGGYTRILKCGFRAGDKAPMAYIELVDRPEAAVEAAAE</sequence>
<keyword id="KW-1185">Reference proteome</keyword>
<keyword id="KW-0687">Ribonucleoprotein</keyword>
<keyword id="KW-0689">Ribosomal protein</keyword>